<comment type="function">
    <text evidence="4 5 10 11 12">Component of the 17S U2 SnRNP complex of the spliceosome, a large ribonucleoprotein complex that removes introns from transcribed pre-mRNAs (PubMed:10882114, PubMed:11533230, PubMed:32494006). The 17S U2 SnRNP complex (1) directly participates in early spliceosome assembly and (2) mediates recognition of the intron branch site during pre-mRNA splicing by promoting the selection of the pre-mRNA branch-site adenosine, the nucleophile for the first step of splicing (PubMed:10882114, PubMed:11533230, PubMed:32494006). Within the 17S U2 SnRNP complex, SF3A1 is part of the SF3A subcomplex that contributes to the assembly of the 17S U2 snRNP, and the subsequent assembly of the pre-spliceosome 'E' complex and the pre-catalytic spliceosome 'A' complex (PubMed:10882114, PubMed:11533230). Involved in pre-mRNA splicing as a component of pre-catalytic spliceosome 'B' complexes (PubMed:29360106, PubMed:30315277).</text>
</comment>
<comment type="subunit">
    <text evidence="1 4 5 6 8 9 10 11 12 13">Component of the 17S U2 SnRNP complex, a ribonucleoprotein complex that contains small nuclear RNA (snRNA) U2 and a number of specific proteins (PubMed:32494006, PubMed:36797247). Part of the SF3A subcomplex of the 17S U2 SnRNP complex which is composed of three subunits; SF3A3/SAP61, SF3A2/SAP62 and SF3A1/SAP114 (PubMed:10882114, PubMed:11533230, PubMed:21349847). SF3A associates with the splicing factor SF3B and a 12S RNA unit to form the mature 17S U2 small nuclear ribonucleoprotein complex (17S U2 snRNP) (PubMed:10882114, PubMed:11533230). SF3A1 functions as a scaffold that interacts directly with both SF3A2 and SF3A3 (PubMed:11533230, PubMed:17098193, PubMed:21349847). Identified in the spliceosome 'E' complex, a precursor of the spliceosome 'A' complex (PubMed:10882114). Identified in the spliceosome 'A' and 'B' complexes (PubMed:29360106, PubMed:30315277). Identified in the spliceosome 'C' complex (PubMed:11991638). Interacts with P2RX6; resulting in a reduction of the splicing activity (By similarity).</text>
</comment>
<comment type="interaction">
    <interactant intactId="EBI-1054743">
        <id>Q15459</id>
    </interactant>
    <interactant intactId="EBI-2603996">
        <id>Q9BXW4</id>
        <label>MAP1LC3C</label>
    </interactant>
    <organismsDiffer>false</organismsDiffer>
    <experiments>3</experiments>
</comment>
<comment type="interaction">
    <interactant intactId="EBI-1054743">
        <id>Q15459</id>
    </interactant>
    <interactant intactId="EBI-473291">
        <id>O75400</id>
        <label>PRPF40A</label>
    </interactant>
    <organismsDiffer>false</organismsDiffer>
    <experiments>3</experiments>
</comment>
<comment type="interaction">
    <interactant intactId="EBI-1054743">
        <id>Q15459</id>
    </interactant>
    <interactant intactId="EBI-721525">
        <id>P98175</id>
        <label>RBM10</label>
    </interactant>
    <organismsDiffer>false</organismsDiffer>
    <experiments>2</experiments>
</comment>
<comment type="interaction">
    <interactant intactId="EBI-1054743">
        <id>Q15459</id>
    </interactant>
    <interactant intactId="EBI-744603">
        <id>Q15637</id>
        <label>SF1</label>
    </interactant>
    <organismsDiffer>false</organismsDiffer>
    <experiments>8</experiments>
</comment>
<comment type="interaction">
    <interactant intactId="EBI-1054743">
        <id>Q15459</id>
    </interactant>
    <interactant intactId="EBI-2462271">
        <id>Q15428</id>
        <label>SF3A2</label>
    </interactant>
    <organismsDiffer>false</organismsDiffer>
    <experiments>6</experiments>
</comment>
<comment type="interaction">
    <interactant intactId="EBI-1054743">
        <id>Q15459</id>
    </interactant>
    <interactant intactId="EBI-1051880">
        <id>Q12874</id>
        <label>SF3A3</label>
    </interactant>
    <organismsDiffer>false</organismsDiffer>
    <experiments>10</experiments>
</comment>
<comment type="interaction">
    <interactant intactId="EBI-1054743">
        <id>Q15459</id>
    </interactant>
    <interactant intactId="EBI-298336">
        <id>P08047</id>
        <label>SP1</label>
    </interactant>
    <organismsDiffer>false</organismsDiffer>
    <experiments>2</experiments>
</comment>
<comment type="subcellular location">
    <subcellularLocation>
        <location evidence="4 10 11">Nucleus</location>
    </subcellularLocation>
    <subcellularLocation>
        <location evidence="9">Nucleus speckle</location>
    </subcellularLocation>
</comment>
<comment type="alternative products">
    <event type="alternative splicing"/>
    <isoform>
        <id>Q15459-1</id>
        <name>1</name>
        <sequence type="displayed"/>
    </isoform>
    <isoform>
        <id>Q15459-2</id>
        <name>2</name>
        <sequence type="described" ref="VSP_054090"/>
    </isoform>
</comment>
<comment type="tissue specificity">
    <text evidence="14">Ubiquitously expressed.</text>
</comment>
<comment type="domain">
    <text>SURP motif 2 mediates direct binding to SF3A3.</text>
</comment>
<accession>Q15459</accession>
<accession>E9PAW1</accession>
<proteinExistence type="evidence at protein level"/>
<organism>
    <name type="scientific">Homo sapiens</name>
    <name type="common">Human</name>
    <dbReference type="NCBI Taxonomy" id="9606"/>
    <lineage>
        <taxon>Eukaryota</taxon>
        <taxon>Metazoa</taxon>
        <taxon>Chordata</taxon>
        <taxon>Craniata</taxon>
        <taxon>Vertebrata</taxon>
        <taxon>Euteleostomi</taxon>
        <taxon>Mammalia</taxon>
        <taxon>Eutheria</taxon>
        <taxon>Euarchontoglires</taxon>
        <taxon>Primates</taxon>
        <taxon>Haplorrhini</taxon>
        <taxon>Catarrhini</taxon>
        <taxon>Hominidae</taxon>
        <taxon>Homo</taxon>
    </lineage>
</organism>
<reference key="1">
    <citation type="journal article" date="1995" name="RNA">
        <title>Mammalian splicing factor SF3a120 represents a new member of the SURP family of proteins and is homologous to the essential splicing factor PRP21p of Saccharomyces cerevisiae.</title>
        <authorList>
            <person name="Kraemer A."/>
            <person name="Mulhauser F."/>
            <person name="Wersig C."/>
            <person name="Groning K."/>
            <person name="Bilbe G."/>
        </authorList>
    </citation>
    <scope>NUCLEOTIDE SEQUENCE [MRNA]</scope>
    <scope>TISSUE SPECIFICITY</scope>
</reference>
<reference key="2">
    <citation type="journal article" date="2004" name="Genome Biol.">
        <title>A genome annotation-driven approach to cloning the human ORFeome.</title>
        <authorList>
            <person name="Collins J.E."/>
            <person name="Wright C.L."/>
            <person name="Edwards C.A."/>
            <person name="Davis M.P."/>
            <person name="Grinham J.A."/>
            <person name="Cole C.G."/>
            <person name="Goward M.E."/>
            <person name="Aguado B."/>
            <person name="Mallya M."/>
            <person name="Mokrab Y."/>
            <person name="Huckle E.J."/>
            <person name="Beare D.M."/>
            <person name="Dunham I."/>
        </authorList>
    </citation>
    <scope>NUCLEOTIDE SEQUENCE [LARGE SCALE MRNA]</scope>
</reference>
<reference key="3">
    <citation type="journal article" date="1999" name="Nature">
        <title>The DNA sequence of human chromosome 22.</title>
        <authorList>
            <person name="Dunham I."/>
            <person name="Hunt A.R."/>
            <person name="Collins J.E."/>
            <person name="Bruskiewich R."/>
            <person name="Beare D.M."/>
            <person name="Clamp M."/>
            <person name="Smink L.J."/>
            <person name="Ainscough R."/>
            <person name="Almeida J.P."/>
            <person name="Babbage A.K."/>
            <person name="Bagguley C."/>
            <person name="Bailey J."/>
            <person name="Barlow K.F."/>
            <person name="Bates K.N."/>
            <person name="Beasley O.P."/>
            <person name="Bird C.P."/>
            <person name="Blakey S.E."/>
            <person name="Bridgeman A.M."/>
            <person name="Buck D."/>
            <person name="Burgess J."/>
            <person name="Burrill W.D."/>
            <person name="Burton J."/>
            <person name="Carder C."/>
            <person name="Carter N.P."/>
            <person name="Chen Y."/>
            <person name="Clark G."/>
            <person name="Clegg S.M."/>
            <person name="Cobley V.E."/>
            <person name="Cole C.G."/>
            <person name="Collier R.E."/>
            <person name="Connor R."/>
            <person name="Conroy D."/>
            <person name="Corby N.R."/>
            <person name="Coville G.J."/>
            <person name="Cox A.V."/>
            <person name="Davis J."/>
            <person name="Dawson E."/>
            <person name="Dhami P.D."/>
            <person name="Dockree C."/>
            <person name="Dodsworth S.J."/>
            <person name="Durbin R.M."/>
            <person name="Ellington A.G."/>
            <person name="Evans K.L."/>
            <person name="Fey J.M."/>
            <person name="Fleming K."/>
            <person name="French L."/>
            <person name="Garner A.A."/>
            <person name="Gilbert J.G.R."/>
            <person name="Goward M.E."/>
            <person name="Grafham D.V."/>
            <person name="Griffiths M.N.D."/>
            <person name="Hall C."/>
            <person name="Hall R.E."/>
            <person name="Hall-Tamlyn G."/>
            <person name="Heathcott R.W."/>
            <person name="Ho S."/>
            <person name="Holmes S."/>
            <person name="Hunt S.E."/>
            <person name="Jones M.C."/>
            <person name="Kershaw J."/>
            <person name="Kimberley A.M."/>
            <person name="King A."/>
            <person name="Laird G.K."/>
            <person name="Langford C.F."/>
            <person name="Leversha M.A."/>
            <person name="Lloyd C."/>
            <person name="Lloyd D.M."/>
            <person name="Martyn I.D."/>
            <person name="Mashreghi-Mohammadi M."/>
            <person name="Matthews L.H."/>
            <person name="Mccann O.T."/>
            <person name="Mcclay J."/>
            <person name="Mclaren S."/>
            <person name="McMurray A.A."/>
            <person name="Milne S.A."/>
            <person name="Mortimore B.J."/>
            <person name="Odell C.N."/>
            <person name="Pavitt R."/>
            <person name="Pearce A.V."/>
            <person name="Pearson D."/>
            <person name="Phillimore B.J.C.T."/>
            <person name="Phillips S.H."/>
            <person name="Plumb R.W."/>
            <person name="Ramsay H."/>
            <person name="Ramsey Y."/>
            <person name="Rogers L."/>
            <person name="Ross M.T."/>
            <person name="Scott C.E."/>
            <person name="Sehra H.K."/>
            <person name="Skuce C.D."/>
            <person name="Smalley S."/>
            <person name="Smith M.L."/>
            <person name="Soderlund C."/>
            <person name="Spragon L."/>
            <person name="Steward C.A."/>
            <person name="Sulston J.E."/>
            <person name="Swann R.M."/>
            <person name="Vaudin M."/>
            <person name="Wall M."/>
            <person name="Wallis J.M."/>
            <person name="Whiteley M.N."/>
            <person name="Willey D.L."/>
            <person name="Williams L."/>
            <person name="Williams S.A."/>
            <person name="Williamson H."/>
            <person name="Wilmer T.E."/>
            <person name="Wilming L."/>
            <person name="Wright C.L."/>
            <person name="Hubbard T."/>
            <person name="Bentley D.R."/>
            <person name="Beck S."/>
            <person name="Rogers J."/>
            <person name="Shimizu N."/>
            <person name="Minoshima S."/>
            <person name="Kawasaki K."/>
            <person name="Sasaki T."/>
            <person name="Asakawa S."/>
            <person name="Kudoh J."/>
            <person name="Shintani A."/>
            <person name="Shibuya K."/>
            <person name="Yoshizaki Y."/>
            <person name="Aoki N."/>
            <person name="Mitsuyama S."/>
            <person name="Roe B.A."/>
            <person name="Chen F."/>
            <person name="Chu L."/>
            <person name="Crabtree J."/>
            <person name="Deschamps S."/>
            <person name="Do A."/>
            <person name="Do T."/>
            <person name="Dorman A."/>
            <person name="Fang F."/>
            <person name="Fu Y."/>
            <person name="Hu P."/>
            <person name="Hua A."/>
            <person name="Kenton S."/>
            <person name="Lai H."/>
            <person name="Lao H.I."/>
            <person name="Lewis J."/>
            <person name="Lewis S."/>
            <person name="Lin S.-P."/>
            <person name="Loh P."/>
            <person name="Malaj E."/>
            <person name="Nguyen T."/>
            <person name="Pan H."/>
            <person name="Phan S."/>
            <person name="Qi S."/>
            <person name="Qian Y."/>
            <person name="Ray L."/>
            <person name="Ren Q."/>
            <person name="Shaull S."/>
            <person name="Sloan D."/>
            <person name="Song L."/>
            <person name="Wang Q."/>
            <person name="Wang Y."/>
            <person name="Wang Z."/>
            <person name="White J."/>
            <person name="Willingham D."/>
            <person name="Wu H."/>
            <person name="Yao Z."/>
            <person name="Zhan M."/>
            <person name="Zhang G."/>
            <person name="Chissoe S."/>
            <person name="Murray J."/>
            <person name="Miller N."/>
            <person name="Minx P."/>
            <person name="Fulton R."/>
            <person name="Johnson D."/>
            <person name="Bemis G."/>
            <person name="Bentley D."/>
            <person name="Bradshaw H."/>
            <person name="Bourne S."/>
            <person name="Cordes M."/>
            <person name="Du Z."/>
            <person name="Fulton L."/>
            <person name="Goela D."/>
            <person name="Graves T."/>
            <person name="Hawkins J."/>
            <person name="Hinds K."/>
            <person name="Kemp K."/>
            <person name="Latreille P."/>
            <person name="Layman D."/>
            <person name="Ozersky P."/>
            <person name="Rohlfing T."/>
            <person name="Scheet P."/>
            <person name="Walker C."/>
            <person name="Wamsley A."/>
            <person name="Wohldmann P."/>
            <person name="Pepin K."/>
            <person name="Nelson J."/>
            <person name="Korf I."/>
            <person name="Bedell J.A."/>
            <person name="Hillier L.W."/>
            <person name="Mardis E."/>
            <person name="Waterston R."/>
            <person name="Wilson R."/>
            <person name="Emanuel B.S."/>
            <person name="Shaikh T."/>
            <person name="Kurahashi H."/>
            <person name="Saitta S."/>
            <person name="Budarf M.L."/>
            <person name="McDermid H.E."/>
            <person name="Johnson A."/>
            <person name="Wong A.C.C."/>
            <person name="Morrow B.E."/>
            <person name="Edelmann L."/>
            <person name="Kim U.J."/>
            <person name="Shizuya H."/>
            <person name="Simon M.I."/>
            <person name="Dumanski J.P."/>
            <person name="Peyrard M."/>
            <person name="Kedra D."/>
            <person name="Seroussi E."/>
            <person name="Fransson I."/>
            <person name="Tapia I."/>
            <person name="Bruder C.E."/>
            <person name="O'Brien K.P."/>
            <person name="Wilkinson P."/>
            <person name="Bodenteich A."/>
            <person name="Hartman K."/>
            <person name="Hu X."/>
            <person name="Khan A.S."/>
            <person name="Lane L."/>
            <person name="Tilahun Y."/>
            <person name="Wright H."/>
        </authorList>
    </citation>
    <scope>NUCLEOTIDE SEQUENCE [LARGE SCALE GENOMIC DNA]</scope>
</reference>
<reference key="4">
    <citation type="journal article" date="2004" name="Genome Res.">
        <title>The status, quality, and expansion of the NIH full-length cDNA project: the Mammalian Gene Collection (MGC).</title>
        <authorList>
            <consortium name="The MGC Project Team"/>
        </authorList>
    </citation>
    <scope>NUCLEOTIDE SEQUENCE [LARGE SCALE MRNA]</scope>
    <source>
        <tissue>Cervix</tissue>
        <tissue>Lymph</tissue>
    </source>
</reference>
<reference key="5">
    <citation type="journal article" date="2000" name="Mol. Cell">
        <title>Functional association of U2 snRNP with the ATP-independent spliceosomal complex E.</title>
        <authorList>
            <person name="Das R."/>
            <person name="Zhou Z."/>
            <person name="Reed R."/>
        </authorList>
    </citation>
    <scope>SUBUNIT</scope>
    <scope>IDENTIFICATION IN A COMPLEX WITH SF3A2 AND SF3A3 AND IN THE 17S U2 SNRNP</scope>
    <scope>SUBCELLULAR LOCATION</scope>
</reference>
<reference key="6">
    <citation type="journal article" date="2001" name="Mol. Cell. Biol.">
        <title>Domains in human splicing factors SF3a60 and SF3a66 required for binding to SF3a120, assembly of the 17S U2 snRNP, and prespliceosome formation.</title>
        <authorList>
            <person name="Nesic D."/>
            <person name="Kraemer A."/>
        </authorList>
    </citation>
    <scope>FUNCTION</scope>
    <scope>SUBUNIT</scope>
</reference>
<reference key="7">
    <citation type="journal article" date="2002" name="RNA">
        <title>Purification and characterization of native spliceosomes suitable for three-dimensional structural analysis.</title>
        <authorList>
            <person name="Jurica M.S."/>
            <person name="Licklider L.J."/>
            <person name="Gygi S.P."/>
            <person name="Grigorieff N."/>
            <person name="Moore M.J."/>
        </authorList>
    </citation>
    <scope>IDENTIFICATION BY MASS SPECTROMETRY</scope>
    <scope>IDENTIFICATION IN THE SPLICEOSOMAL C COMPLEX</scope>
    <scope>SUBUNIT</scope>
</reference>
<reference key="8">
    <citation type="journal article" date="2005" name="Nat. Biotechnol.">
        <title>Immunoaffinity profiling of tyrosine phosphorylation in cancer cells.</title>
        <authorList>
            <person name="Rush J."/>
            <person name="Moritz A."/>
            <person name="Lee K.A."/>
            <person name="Guo A."/>
            <person name="Goss V.L."/>
            <person name="Spek E.J."/>
            <person name="Zhang H."/>
            <person name="Zha X.-M."/>
            <person name="Polakiewicz R.D."/>
            <person name="Comb M.J."/>
        </authorList>
    </citation>
    <scope>PHOSPHORYLATION [LARGE SCALE ANALYSIS] AT TYR-456 AND TYR-759</scope>
    <scope>IDENTIFICATION BY MASS SPECTROMETRY [LARGE SCALE ANALYSIS]</scope>
</reference>
<reference key="9">
    <citation type="journal article" date="2006" name="Cell">
        <title>Global, in vivo, and site-specific phosphorylation dynamics in signaling networks.</title>
        <authorList>
            <person name="Olsen J.V."/>
            <person name="Blagoev B."/>
            <person name="Gnad F."/>
            <person name="Macek B."/>
            <person name="Kumar C."/>
            <person name="Mortensen P."/>
            <person name="Mann M."/>
        </authorList>
    </citation>
    <scope>PHOSPHORYLATION [LARGE SCALE ANALYSIS] AT SER-329 AND SER-359</scope>
    <scope>IDENTIFICATION BY MASS SPECTROMETRY [LARGE SCALE ANALYSIS]</scope>
    <source>
        <tissue>Cervix carcinoma</tissue>
    </source>
</reference>
<reference key="10">
    <citation type="journal article" date="2008" name="J. Proteome Res.">
        <title>Phosphorylation analysis of primary human T lymphocytes using sequential IMAC and titanium oxide enrichment.</title>
        <authorList>
            <person name="Carrascal M."/>
            <person name="Ovelleiro D."/>
            <person name="Casas V."/>
            <person name="Gay M."/>
            <person name="Abian J."/>
        </authorList>
    </citation>
    <scope>PHOSPHORYLATION [LARGE SCALE ANALYSIS] AT SER-329</scope>
    <scope>IDENTIFICATION BY MASS SPECTROMETRY [LARGE SCALE ANALYSIS]</scope>
    <source>
        <tissue>T-cell</tissue>
    </source>
</reference>
<reference key="11">
    <citation type="journal article" date="2008" name="Proc. Natl. Acad. Sci. U.S.A.">
        <title>A quantitative atlas of mitotic phosphorylation.</title>
        <authorList>
            <person name="Dephoure N."/>
            <person name="Zhou C."/>
            <person name="Villen J."/>
            <person name="Beausoleil S.A."/>
            <person name="Bakalarski C.E."/>
            <person name="Elledge S.J."/>
            <person name="Gygi S.P."/>
        </authorList>
    </citation>
    <scope>PHOSPHORYLATION [LARGE SCALE ANALYSIS] AT SER-329; SER-413 AND SER-451</scope>
    <scope>IDENTIFICATION BY MASS SPECTROMETRY [LARGE SCALE ANALYSIS]</scope>
    <source>
        <tissue>Cervix carcinoma</tissue>
    </source>
</reference>
<reference key="12">
    <citation type="journal article" date="2008" name="Proteomics">
        <title>Large-scale phosphoproteome analysis of human liver tissue by enrichment and fractionation of phosphopeptides with strong anion exchange chromatography.</title>
        <authorList>
            <person name="Han G."/>
            <person name="Ye M."/>
            <person name="Zhou H."/>
            <person name="Jiang X."/>
            <person name="Feng S."/>
            <person name="Jiang X."/>
            <person name="Tian R."/>
            <person name="Wan D."/>
            <person name="Zou H."/>
            <person name="Gu J."/>
        </authorList>
    </citation>
    <scope>PHOSPHORYLATION [LARGE SCALE ANALYSIS] AT SER-329</scope>
    <scope>IDENTIFICATION BY MASS SPECTROMETRY [LARGE SCALE ANALYSIS]</scope>
    <source>
        <tissue>Liver</tissue>
    </source>
</reference>
<reference key="13">
    <citation type="journal article" date="2009" name="Anal. Chem.">
        <title>Lys-N and trypsin cover complementary parts of the phosphoproteome in a refined SCX-based approach.</title>
        <authorList>
            <person name="Gauci S."/>
            <person name="Helbig A.O."/>
            <person name="Slijper M."/>
            <person name="Krijgsveld J."/>
            <person name="Heck A.J."/>
            <person name="Mohammed S."/>
        </authorList>
    </citation>
    <scope>IDENTIFICATION BY MASS SPECTROMETRY [LARGE SCALE ANALYSIS]</scope>
</reference>
<reference key="14">
    <citation type="journal article" date="2009" name="Sci. Signal.">
        <title>Quantitative phosphoproteomic analysis of T cell receptor signaling reveals system-wide modulation of protein-protein interactions.</title>
        <authorList>
            <person name="Mayya V."/>
            <person name="Lundgren D.H."/>
            <person name="Hwang S.-I."/>
            <person name="Rezaul K."/>
            <person name="Wu L."/>
            <person name="Eng J.K."/>
            <person name="Rodionov V."/>
            <person name="Han D.K."/>
        </authorList>
    </citation>
    <scope>PHOSPHORYLATION [LARGE SCALE ANALYSIS] AT SER-320; SER-329; SER-359 AND SER-451</scope>
    <scope>IDENTIFICATION BY MASS SPECTROMETRY [LARGE SCALE ANALYSIS]</scope>
    <source>
        <tissue>Leukemic T-cell</tissue>
    </source>
</reference>
<reference key="15">
    <citation type="journal article" date="2009" name="Science">
        <title>Lysine acetylation targets protein complexes and co-regulates major cellular functions.</title>
        <authorList>
            <person name="Choudhary C."/>
            <person name="Kumar C."/>
            <person name="Gnad F."/>
            <person name="Nielsen M.L."/>
            <person name="Rehman M."/>
            <person name="Walther T.C."/>
            <person name="Olsen J.V."/>
            <person name="Mann M."/>
        </authorList>
    </citation>
    <scope>ACETYLATION [LARGE SCALE ANALYSIS] AT LYS-55</scope>
    <scope>IDENTIFICATION BY MASS SPECTROMETRY [LARGE SCALE ANALYSIS]</scope>
</reference>
<reference key="16">
    <citation type="journal article" date="2010" name="Sci. Signal.">
        <title>Quantitative phosphoproteomics reveals widespread full phosphorylation site occupancy during mitosis.</title>
        <authorList>
            <person name="Olsen J.V."/>
            <person name="Vermeulen M."/>
            <person name="Santamaria A."/>
            <person name="Kumar C."/>
            <person name="Miller M.L."/>
            <person name="Jensen L.J."/>
            <person name="Gnad F."/>
            <person name="Cox J."/>
            <person name="Jensen T.S."/>
            <person name="Nigg E.A."/>
            <person name="Brunak S."/>
            <person name="Mann M."/>
        </authorList>
    </citation>
    <scope>PHOSPHORYLATION [LARGE SCALE ANALYSIS] AT SER-329; SER-359; SER-413 AND SER-451</scope>
    <scope>IDENTIFICATION BY MASS SPECTROMETRY [LARGE SCALE ANALYSIS]</scope>
    <source>
        <tissue>Cervix carcinoma</tissue>
    </source>
</reference>
<reference key="17">
    <citation type="journal article" date="2011" name="BMC Syst. Biol.">
        <title>Initial characterization of the human central proteome.</title>
        <authorList>
            <person name="Burkard T.R."/>
            <person name="Planyavsky M."/>
            <person name="Kaupe I."/>
            <person name="Breitwieser F.P."/>
            <person name="Buerckstuemmer T."/>
            <person name="Bennett K.L."/>
            <person name="Superti-Furga G."/>
            <person name="Colinge J."/>
        </authorList>
    </citation>
    <scope>IDENTIFICATION BY MASS SPECTROMETRY [LARGE SCALE ANALYSIS]</scope>
</reference>
<reference key="18">
    <citation type="journal article" date="2011" name="J. Biol. Chem.">
        <title>Interaction domains and nuclear targeting signals in subunits of the U2 small nuclear ribonucleoprotein particle-associated splicing factor SF3a.</title>
        <authorList>
            <person name="Huang C.J."/>
            <person name="Ferfoglia F."/>
            <person name="Raleff F."/>
            <person name="Kraemer A."/>
        </authorList>
    </citation>
    <scope>SUBUNIT</scope>
    <scope>SUBCELLULAR LOCATION</scope>
</reference>
<reference key="19">
    <citation type="journal article" date="2011" name="Sci. Signal.">
        <title>System-wide temporal characterization of the proteome and phosphoproteome of human embryonic stem cell differentiation.</title>
        <authorList>
            <person name="Rigbolt K.T."/>
            <person name="Prokhorova T.A."/>
            <person name="Akimov V."/>
            <person name="Henningsen J."/>
            <person name="Johansen P.T."/>
            <person name="Kratchmarova I."/>
            <person name="Kassem M."/>
            <person name="Mann M."/>
            <person name="Olsen J.V."/>
            <person name="Blagoev B."/>
        </authorList>
    </citation>
    <scope>PHOSPHORYLATION [LARGE SCALE ANALYSIS] AT SER-320; SER-329 AND SER-359</scope>
    <scope>IDENTIFICATION BY MASS SPECTROMETRY [LARGE SCALE ANALYSIS]</scope>
</reference>
<reference key="20">
    <citation type="journal article" date="2012" name="Mol. Cell. Proteomics">
        <title>Comparative large-scale characterisation of plant vs. mammal proteins reveals similar and idiosyncratic N-alpha acetylation features.</title>
        <authorList>
            <person name="Bienvenut W.V."/>
            <person name="Sumpton D."/>
            <person name="Martinez A."/>
            <person name="Lilla S."/>
            <person name="Espagne C."/>
            <person name="Meinnel T."/>
            <person name="Giglione C."/>
        </authorList>
    </citation>
    <scope>CLEAVAGE OF INITIATOR METHIONINE [LARGE SCALE ANALYSIS]</scope>
    <scope>IDENTIFICATION BY MASS SPECTROMETRY [LARGE SCALE ANALYSIS]</scope>
</reference>
<reference key="21">
    <citation type="journal article" date="2013" name="J. Proteome Res.">
        <title>Toward a comprehensive characterization of a human cancer cell phosphoproteome.</title>
        <authorList>
            <person name="Zhou H."/>
            <person name="Di Palma S."/>
            <person name="Preisinger C."/>
            <person name="Peng M."/>
            <person name="Polat A.N."/>
            <person name="Heck A.J."/>
            <person name="Mohammed S."/>
        </authorList>
    </citation>
    <scope>PHOSPHORYLATION [LARGE SCALE ANALYSIS] AT SER-329; SER-359; SER-413; SER-451 AND SER-508</scope>
    <scope>IDENTIFICATION BY MASS SPECTROMETRY [LARGE SCALE ANALYSIS]</scope>
    <source>
        <tissue>Cervix carcinoma</tissue>
        <tissue>Erythroleukemia</tissue>
    </source>
</reference>
<reference key="22">
    <citation type="journal article" date="2014" name="J. Proteomics">
        <title>An enzyme assisted RP-RPLC approach for in-depth analysis of human liver phosphoproteome.</title>
        <authorList>
            <person name="Bian Y."/>
            <person name="Song C."/>
            <person name="Cheng K."/>
            <person name="Dong M."/>
            <person name="Wang F."/>
            <person name="Huang J."/>
            <person name="Sun D."/>
            <person name="Wang L."/>
            <person name="Ye M."/>
            <person name="Zou H."/>
        </authorList>
    </citation>
    <scope>PHOSPHORYLATION [LARGE SCALE ANALYSIS] AT SER-329</scope>
    <scope>IDENTIFICATION BY MASS SPECTROMETRY [LARGE SCALE ANALYSIS]</scope>
    <source>
        <tissue>Liver</tissue>
    </source>
</reference>
<reference key="23">
    <citation type="journal article" date="2014" name="Nat. Struct. Mol. Biol.">
        <title>Uncovering global SUMOylation signaling networks in a site-specific manner.</title>
        <authorList>
            <person name="Hendriks I.A."/>
            <person name="D'Souza R.C."/>
            <person name="Yang B."/>
            <person name="Verlaan-de Vries M."/>
            <person name="Mann M."/>
            <person name="Vertegaal A.C."/>
        </authorList>
    </citation>
    <scope>SUMOYLATION [LARGE SCALE ANALYSIS] AT LYS-542 AND LYS-686</scope>
    <scope>IDENTIFICATION BY MASS SPECTROMETRY [LARGE SCALE ANALYSIS]</scope>
</reference>
<reference key="24">
    <citation type="journal article" date="2015" name="Cell Rep.">
        <title>SUMO-2 orchestrates chromatin modifiers in response to DNA damage.</title>
        <authorList>
            <person name="Hendriks I.A."/>
            <person name="Treffers L.W."/>
            <person name="Verlaan-de Vries M."/>
            <person name="Olsen J.V."/>
            <person name="Vertegaal A.C."/>
        </authorList>
    </citation>
    <scope>SUMOYLATION [LARGE SCALE ANALYSIS] AT LYS-686</scope>
    <scope>IDENTIFICATION BY MASS SPECTROMETRY [LARGE SCALE ANALYSIS]</scope>
</reference>
<reference key="25">
    <citation type="journal article" date="2017" name="Nat. Struct. Mol. Biol.">
        <title>Site-specific mapping of the human SUMO proteome reveals co-modification with phosphorylation.</title>
        <authorList>
            <person name="Hendriks I.A."/>
            <person name="Lyon D."/>
            <person name="Young C."/>
            <person name="Jensen L.J."/>
            <person name="Vertegaal A.C."/>
            <person name="Nielsen M.L."/>
        </authorList>
    </citation>
    <scope>SUMOYLATION [LARGE SCALE ANALYSIS] AT LYS-20; LYS-131; LYS-424; LYS-499; LYS-542 AND LYS-686</scope>
    <scope>IDENTIFICATION BY MASS SPECTROMETRY [LARGE SCALE ANALYSIS]</scope>
</reference>
<reference key="26">
    <citation type="submission" date="2005-06" db="PDB data bank">
        <title>Solution structure of a human ubiquitin-like domain in SF3A1.</title>
        <authorList>
            <consortium name="Structural genomics consortium (SGC)"/>
        </authorList>
    </citation>
    <scope>STRUCTURE BY NMR OF 704-789</scope>
</reference>
<reference key="27">
    <citation type="journal article" date="2006" name="Structure">
        <title>Solution structures of the SURP domains and the subunit-assembly mechanism within the splicing factor SF3a complex in 17S U2 snRNP.</title>
        <authorList>
            <person name="Kuwasako K."/>
            <person name="He F."/>
            <person name="Inoue M."/>
            <person name="Tanaka A."/>
            <person name="Sugano S."/>
            <person name="Guntert P."/>
            <person name="Muto Y."/>
            <person name="Yokoyama S."/>
        </authorList>
    </citation>
    <scope>STRUCTURE BY NMR OF 48-110 AND 134-217 IN COMPLEX WITH SF3A3</scope>
    <scope>SUBUNIT</scope>
    <scope>SURP MOTIFS</scope>
    <scope>MUTAGENESIS OF GLU-48; LYS-55; PHE-162 AND LEU-169</scope>
</reference>
<reference evidence="19 20 21" key="28">
    <citation type="journal article" date="2018" name="Cell Res.">
        <title>Structure of the human activated spliceosome in three conformational states.</title>
        <authorList>
            <person name="Zhang X."/>
            <person name="Yan C."/>
            <person name="Zhan X."/>
            <person name="Li L."/>
            <person name="Lei J."/>
            <person name="Shi Y."/>
        </authorList>
    </citation>
    <scope>STRUCTURE BY ELECTRON MICROSCOPY (4.90 ANGSTROMS)</scope>
    <scope>FUNCTION</scope>
    <scope>SUBUNIT</scope>
    <scope>SUBCELLULAR LOCATION</scope>
</reference>
<reference key="29">
    <citation type="journal article" date="2018" name="Cell Res.">
        <title>Structures of the human pre-catalytic spliceosome and its precursor spliceosome.</title>
        <authorList>
            <person name="Zhan X."/>
            <person name="Yan C."/>
            <person name="Zhang X."/>
            <person name="Lei J."/>
            <person name="Shi Y."/>
        </authorList>
    </citation>
    <scope>STRUCTURE BY ELECTRON MICROSCOPY (3.80 ANGSTROMS)</scope>
    <scope>FUNCTION</scope>
    <scope>SUBUNIT</scope>
    <scope>SUBCELLULAR LOCATION</scope>
</reference>
<reference key="30">
    <citation type="journal article" date="2006" name="Science">
        <title>The consensus coding sequences of human breast and colorectal cancers.</title>
        <authorList>
            <person name="Sjoeblom T."/>
            <person name="Jones S."/>
            <person name="Wood L.D."/>
            <person name="Parsons D.W."/>
            <person name="Lin J."/>
            <person name="Barber T.D."/>
            <person name="Mandelker D."/>
            <person name="Leary R.J."/>
            <person name="Ptak J."/>
            <person name="Silliman N."/>
            <person name="Szabo S."/>
            <person name="Buckhaults P."/>
            <person name="Farrell C."/>
            <person name="Meeh P."/>
            <person name="Markowitz S.D."/>
            <person name="Willis J."/>
            <person name="Dawson D."/>
            <person name="Willson J.K.V."/>
            <person name="Gazdar A.F."/>
            <person name="Hartigan J."/>
            <person name="Wu L."/>
            <person name="Liu C."/>
            <person name="Parmigiani G."/>
            <person name="Park B.H."/>
            <person name="Bachman K.E."/>
            <person name="Papadopoulos N."/>
            <person name="Vogelstein B."/>
            <person name="Kinzler K.W."/>
            <person name="Velculescu V.E."/>
        </authorList>
    </citation>
    <scope>VARIANT [LARGE SCALE ANALYSIS] TRP-511</scope>
</reference>
<reference evidence="22" key="31">
    <citation type="journal article" date="2020" name="Nature">
        <title>Molecular architecture of the human 17S U2 snRNP.</title>
        <authorList>
            <person name="Zhang Z."/>
            <person name="Will C.L."/>
            <person name="Bertram K."/>
            <person name="Dybkov O."/>
            <person name="Hartmuth K."/>
            <person name="Agafonov D.E."/>
            <person name="Hofele R."/>
            <person name="Urlaub H."/>
            <person name="Kastner B."/>
            <person name="Luehrmann R."/>
            <person name="Stark H."/>
        </authorList>
    </citation>
    <scope>STRUCTURE BY ELECTRON MICROSCOPY (4.10 ANGSTROMS) IN COMPLEX WITH THE 17S U2 SNRNP COMPLEX</scope>
    <scope>FUNCTION</scope>
    <scope>IDENTIFICATION IN THE 17S U2 SNRNP COMPLEX</scope>
</reference>
<reference evidence="23" key="32">
    <citation type="journal article" date="2023" name="Nat. Commun.">
        <title>Mechanisms of the RNA helicases DDX42 and DDX46 in human U2 snRNP assembly.</title>
        <authorList>
            <person name="Yang F."/>
            <person name="Bian T."/>
            <person name="Zhan X."/>
            <person name="Chen Z."/>
            <person name="Xing Z."/>
            <person name="Larsen N.A."/>
            <person name="Zhang X."/>
            <person name="Shi Y."/>
        </authorList>
    </citation>
    <scope>STRUCTURE BY ELECTRON MICROSCOPY (2.70 ANGSTROMS) IN COMPLEX WITH THE 17S U2 SNRNP COMPLEX</scope>
    <scope>IDENTIFICATION IN THE 17S U2 SNRNP COMPLEX</scope>
</reference>
<feature type="initiator methionine" description="Removed" evidence="33">
    <location>
        <position position="1"/>
    </location>
</feature>
<feature type="chain" id="PRO_0000114917" description="Splicing factor 3A subunit 1">
    <location>
        <begin position="2"/>
        <end position="793"/>
    </location>
</feature>
<feature type="repeat" description="SURP motif 1">
    <location>
        <begin position="52"/>
        <end position="94"/>
    </location>
</feature>
<feature type="repeat" description="SURP motif 2">
    <location>
        <begin position="166"/>
        <end position="208"/>
    </location>
</feature>
<feature type="domain" description="Ubiquitin-like" evidence="2">
    <location>
        <begin position="707"/>
        <end position="793"/>
    </location>
</feature>
<feature type="region of interest" description="Disordered" evidence="3">
    <location>
        <begin position="1"/>
        <end position="43"/>
    </location>
</feature>
<feature type="region of interest" description="Disordered" evidence="3">
    <location>
        <begin position="318"/>
        <end position="428"/>
    </location>
</feature>
<feature type="region of interest" description="Disordered" evidence="3">
    <location>
        <begin position="488"/>
        <end position="518"/>
    </location>
</feature>
<feature type="region of interest" description="Disordered" evidence="3">
    <location>
        <begin position="530"/>
        <end position="584"/>
    </location>
</feature>
<feature type="region of interest" description="Disordered" evidence="3">
    <location>
        <begin position="665"/>
        <end position="688"/>
    </location>
</feature>
<feature type="region of interest" description="Required and sufficient for nuclear import" evidence="9">
    <location>
        <begin position="680"/>
        <end position="702"/>
    </location>
</feature>
<feature type="compositionally biased region" description="Pro residues" evidence="3">
    <location>
        <begin position="8"/>
        <end position="19"/>
    </location>
</feature>
<feature type="compositionally biased region" description="Basic and acidic residues" evidence="3">
    <location>
        <begin position="21"/>
        <end position="34"/>
    </location>
</feature>
<feature type="compositionally biased region" description="Acidic residues" evidence="3">
    <location>
        <begin position="320"/>
        <end position="334"/>
    </location>
</feature>
<feature type="compositionally biased region" description="Acidic residues" evidence="3">
    <location>
        <begin position="354"/>
        <end position="364"/>
    </location>
</feature>
<feature type="compositionally biased region" description="Pro residues" evidence="3">
    <location>
        <begin position="368"/>
        <end position="384"/>
    </location>
</feature>
<feature type="compositionally biased region" description="Basic and acidic residues" evidence="3">
    <location>
        <begin position="388"/>
        <end position="397"/>
    </location>
</feature>
<feature type="compositionally biased region" description="Basic and acidic residues" evidence="3">
    <location>
        <begin position="488"/>
        <end position="502"/>
    </location>
</feature>
<feature type="compositionally biased region" description="Polar residues" evidence="3">
    <location>
        <begin position="509"/>
        <end position="518"/>
    </location>
</feature>
<feature type="compositionally biased region" description="Pro residues" evidence="3">
    <location>
        <begin position="665"/>
        <end position="675"/>
    </location>
</feature>
<feature type="site" description="Critical for binding to SF3A3">
    <location>
        <position position="169"/>
    </location>
</feature>
<feature type="modified residue" description="N6-acetyllysine" evidence="29">
    <location>
        <position position="55"/>
    </location>
</feature>
<feature type="modified residue" description="Phosphoserine" evidence="30 32">
    <location>
        <position position="320"/>
    </location>
</feature>
<feature type="modified residue" description="Phosphoserine" evidence="25 26 27 28 30 31 32 34 35">
    <location>
        <position position="329"/>
    </location>
</feature>
<feature type="modified residue" description="Phosphoserine" evidence="25 30 31 32 34">
    <location>
        <position position="359"/>
    </location>
</feature>
<feature type="modified residue" description="Phosphoserine" evidence="27 31 34">
    <location>
        <position position="413"/>
    </location>
</feature>
<feature type="modified residue" description="Phosphoserine" evidence="27 30 31 34">
    <location>
        <position position="451"/>
    </location>
</feature>
<feature type="modified residue" description="Phosphotyrosine" evidence="24">
    <location>
        <position position="456"/>
    </location>
</feature>
<feature type="modified residue" description="Phosphoserine" evidence="34">
    <location>
        <position position="508"/>
    </location>
</feature>
<feature type="modified residue" description="Phosphotyrosine" evidence="24">
    <location>
        <position position="759"/>
    </location>
</feature>
<feature type="cross-link" description="Glycyl lysine isopeptide (Lys-Gly) (interchain with G-Cter in SUMO2)" evidence="38">
    <location>
        <position position="20"/>
    </location>
</feature>
<feature type="cross-link" description="Glycyl lysine isopeptide (Lys-Gly) (interchain with G-Cter in SUMO2)" evidence="38">
    <location>
        <position position="131"/>
    </location>
</feature>
<feature type="cross-link" description="Glycyl lysine isopeptide (Lys-Gly) (interchain with G-Cter in SUMO2)" evidence="38">
    <location>
        <position position="424"/>
    </location>
</feature>
<feature type="cross-link" description="Glycyl lysine isopeptide (Lys-Gly) (interchain with G-Cter in SUMO2)" evidence="38">
    <location>
        <position position="499"/>
    </location>
</feature>
<feature type="cross-link" description="Glycyl lysine isopeptide (Lys-Gly) (interchain with G-Cter in SUMO2)" evidence="36 38">
    <location>
        <position position="542"/>
    </location>
</feature>
<feature type="cross-link" description="Glycyl lysine isopeptide (Lys-Gly) (interchain with G-Cter in SUMO2)" evidence="36 37 38">
    <location>
        <position position="686"/>
    </location>
</feature>
<feature type="splice variant" id="VSP_054090" description="In isoform 2." evidence="18">
    <location>
        <begin position="106"/>
        <end position="170"/>
    </location>
</feature>
<feature type="sequence variant" id="VAR_036290" description="In a colorectal cancer sample; somatic mutation; dbSNP:rs765594577." evidence="7">
    <original>R</original>
    <variation>W</variation>
    <location>
        <position position="511"/>
    </location>
</feature>
<feature type="mutagenesis site" description="SLURP 1 motif acquires binding to SF3A3; when associated with Leu-55." evidence="8">
    <original>E</original>
    <variation>F</variation>
    <location>
        <position position="48"/>
    </location>
</feature>
<feature type="mutagenesis site" description="SLURP 1 motif acquires binding to SF3A3; when associated with Phe-48." evidence="8">
    <original>K</original>
    <variation>L</variation>
    <location>
        <position position="55"/>
    </location>
</feature>
<feature type="mutagenesis site" description="No effect on binding to SF3A3." evidence="8">
    <original>F</original>
    <variation>E</variation>
    <location>
        <position position="162"/>
    </location>
</feature>
<feature type="mutagenesis site" description="Abolishes binding to SF3A3." evidence="8">
    <original>L</original>
    <variation>K</variation>
    <location>
        <position position="169"/>
    </location>
</feature>
<feature type="helix" evidence="40">
    <location>
        <begin position="48"/>
        <end position="63"/>
    </location>
</feature>
<feature type="helix" evidence="40">
    <location>
        <begin position="66"/>
        <end position="74"/>
    </location>
</feature>
<feature type="helix" evidence="40">
    <location>
        <begin position="79"/>
        <end position="84"/>
    </location>
</feature>
<feature type="helix" evidence="40">
    <location>
        <begin position="91"/>
        <end position="103"/>
    </location>
</feature>
<feature type="helix" evidence="42">
    <location>
        <begin position="161"/>
        <end position="174"/>
    </location>
</feature>
<feature type="strand" evidence="42">
    <location>
        <begin position="178"/>
        <end position="181"/>
    </location>
</feature>
<feature type="helix" evidence="42">
    <location>
        <begin position="186"/>
        <end position="189"/>
    </location>
</feature>
<feature type="turn" evidence="42">
    <location>
        <begin position="190"/>
        <end position="192"/>
    </location>
</feature>
<feature type="helix" evidence="41">
    <location>
        <begin position="193"/>
        <end position="198"/>
    </location>
</feature>
<feature type="helix" evidence="42">
    <location>
        <begin position="205"/>
        <end position="217"/>
    </location>
</feature>
<feature type="helix" evidence="42">
    <location>
        <begin position="221"/>
        <end position="225"/>
    </location>
</feature>
<feature type="turn" evidence="42">
    <location>
        <begin position="231"/>
        <end position="233"/>
    </location>
</feature>
<feature type="helix" evidence="42">
    <location>
        <begin position="236"/>
        <end position="271"/>
    </location>
</feature>
<feature type="strand" evidence="46">
    <location>
        <begin position="410"/>
        <end position="412"/>
    </location>
</feature>
<feature type="strand" evidence="45">
    <location>
        <begin position="414"/>
        <end position="416"/>
    </location>
</feature>
<feature type="strand" evidence="46">
    <location>
        <begin position="417"/>
        <end position="421"/>
    </location>
</feature>
<feature type="helix" evidence="45">
    <location>
        <begin position="422"/>
        <end position="431"/>
    </location>
</feature>
<feature type="helix" evidence="45">
    <location>
        <begin position="436"/>
        <end position="449"/>
    </location>
</feature>
<feature type="helix" evidence="45">
    <location>
        <begin position="459"/>
        <end position="471"/>
    </location>
</feature>
<feature type="strand" evidence="45">
    <location>
        <begin position="474"/>
        <end position="480"/>
    </location>
</feature>
<feature type="helix" evidence="46">
    <location>
        <begin position="506"/>
        <end position="508"/>
    </location>
</feature>
<feature type="helix" evidence="46">
    <location>
        <begin position="509"/>
        <end position="518"/>
    </location>
</feature>
<feature type="strand" evidence="44">
    <location>
        <begin position="704"/>
        <end position="710"/>
    </location>
</feature>
<feature type="strand" evidence="39">
    <location>
        <begin position="715"/>
        <end position="721"/>
    </location>
</feature>
<feature type="strand" evidence="44">
    <location>
        <begin position="726"/>
        <end position="732"/>
    </location>
</feature>
<feature type="helix" evidence="44">
    <location>
        <begin position="737"/>
        <end position="748"/>
    </location>
</feature>
<feature type="helix" evidence="44">
    <location>
        <begin position="752"/>
        <end position="754"/>
    </location>
</feature>
<feature type="strand" evidence="44">
    <location>
        <begin position="755"/>
        <end position="759"/>
    </location>
</feature>
<feature type="strand" evidence="39">
    <location>
        <begin position="762"/>
        <end position="764"/>
    </location>
</feature>
<feature type="strand" evidence="43">
    <location>
        <begin position="766"/>
        <end position="769"/>
    </location>
</feature>
<feature type="helix" evidence="44">
    <location>
        <begin position="771"/>
        <end position="773"/>
    </location>
</feature>
<feature type="strand" evidence="44">
    <location>
        <begin position="779"/>
        <end position="785"/>
    </location>
</feature>
<protein>
    <recommendedName>
        <fullName>Splicing factor 3A subunit 1</fullName>
    </recommendedName>
    <alternativeName>
        <fullName evidence="15 16 17">SF3a120</fullName>
    </alternativeName>
    <alternativeName>
        <fullName>Spliceosome-associated protein 114</fullName>
        <shortName>SAP 114</shortName>
    </alternativeName>
</protein>
<name>SF3A1_HUMAN</name>
<sequence>MPAGPVQAVPPPPPVPTEPKQPTEEEASSKEDSAPSKPVVGIIYPPPEVRNIVDKTASFVARNGPEFEARIRQNEINNPKFNFLNPNDPYHAYYRHKVSEFKEGKAQEPSAAIPKVMQQQQQTTQQQLPQKVQAQVIQETIVPKEPPPEFEFIADPPSISAFDLDVVKLTAQFVARNGRQFLTQLMQKEQRNYQFDFLRPQHSLFNYFTKLVEQYTKILIPPKGLFSKLKKEAENPREVLDQVCYRVEWAKFQERERKKEEEEKEKERVAYAQIDWHDFVVVETVDFQPNEQGNFPPPTTPEELGARILIQERYEKFGESEEVEMEVESDEEDDKQEKAEEPPSQLDQDTQVQDMDEGSDDEEEGQKVPPPPETPMPPPLPPTPDQVIVRKDYDPKASKPLPPAPAPDEYLVSPITGEKIPASKMQEHMRIGLLDPRWLEQRDRSIREKQSDDEVYAPGLDIESSLKQLAERRTDIFGVEETAIGKKIGEEEIQKPEEKVTWDGHSGSMARTQQAAQANITLQEQIEAIHKAKGLVPEDDTKEKIGPSKPNEIPQQPPPPSSATNIPSSAPPITSVPRPPTMPPPVRTTVVSAVPVMPRPPMASVVRLPPGSVIAPMPPIIHAPRINVVPMPPSAPPIMAPRPPPMIVPTAFVPAPPVAPVPAPAPMPPVHPPPPMEDEPTSKKLKTEDSLMPEEEFLRRNKGPVSIKVQVPNMQDKTEWKLNGQVLVFTLPLTDQVSVIKVKIHEATGMPAGKQKLQYEGIFIKDSNSLAYYNMANGAVIHLALKERGGRKK</sequence>
<keyword id="KW-0002">3D-structure</keyword>
<keyword id="KW-0007">Acetylation</keyword>
<keyword id="KW-0025">Alternative splicing</keyword>
<keyword id="KW-1017">Isopeptide bond</keyword>
<keyword id="KW-0507">mRNA processing</keyword>
<keyword id="KW-0508">mRNA splicing</keyword>
<keyword id="KW-0539">Nucleus</keyword>
<keyword id="KW-0597">Phosphoprotein</keyword>
<keyword id="KW-1267">Proteomics identification</keyword>
<keyword id="KW-1185">Reference proteome</keyword>
<keyword id="KW-0677">Repeat</keyword>
<keyword id="KW-0747">Spliceosome</keyword>
<keyword id="KW-0832">Ubl conjugation</keyword>
<gene>
    <name type="primary">SF3A1</name>
    <name type="synonym">SAP114</name>
</gene>
<evidence type="ECO:0000250" key="1">
    <source>
        <dbReference type="UniProtKB" id="Q8K4Z5"/>
    </source>
</evidence>
<evidence type="ECO:0000255" key="2">
    <source>
        <dbReference type="PROSITE-ProRule" id="PRU00214"/>
    </source>
</evidence>
<evidence type="ECO:0000256" key="3">
    <source>
        <dbReference type="SAM" id="MobiDB-lite"/>
    </source>
</evidence>
<evidence type="ECO:0000269" key="4">
    <source>
    </source>
</evidence>
<evidence type="ECO:0000269" key="5">
    <source>
    </source>
</evidence>
<evidence type="ECO:0000269" key="6">
    <source>
    </source>
</evidence>
<evidence type="ECO:0000269" key="7">
    <source>
    </source>
</evidence>
<evidence type="ECO:0000269" key="8">
    <source>
    </source>
</evidence>
<evidence type="ECO:0000269" key="9">
    <source>
    </source>
</evidence>
<evidence type="ECO:0000269" key="10">
    <source>
    </source>
</evidence>
<evidence type="ECO:0000269" key="11">
    <source>
    </source>
</evidence>
<evidence type="ECO:0000269" key="12">
    <source>
    </source>
</evidence>
<evidence type="ECO:0000269" key="13">
    <source>
    </source>
</evidence>
<evidence type="ECO:0000269" key="14">
    <source>
    </source>
</evidence>
<evidence type="ECO:0000303" key="15">
    <source>
    </source>
</evidence>
<evidence type="ECO:0000303" key="16">
    <source>
    </source>
</evidence>
<evidence type="ECO:0000303" key="17">
    <source>
    </source>
</evidence>
<evidence type="ECO:0000305" key="18"/>
<evidence type="ECO:0007744" key="19">
    <source>
        <dbReference type="PDB" id="5Z56"/>
    </source>
</evidence>
<evidence type="ECO:0007744" key="20">
    <source>
        <dbReference type="PDB" id="5Z57"/>
    </source>
</evidence>
<evidence type="ECO:0007744" key="21">
    <source>
        <dbReference type="PDB" id="5Z58"/>
    </source>
</evidence>
<evidence type="ECO:0007744" key="22">
    <source>
        <dbReference type="PDB" id="6Y5Q"/>
    </source>
</evidence>
<evidence type="ECO:0007744" key="23">
    <source>
        <dbReference type="PDB" id="8HK1"/>
    </source>
</evidence>
<evidence type="ECO:0007744" key="24">
    <source>
    </source>
</evidence>
<evidence type="ECO:0007744" key="25">
    <source>
    </source>
</evidence>
<evidence type="ECO:0007744" key="26">
    <source>
    </source>
</evidence>
<evidence type="ECO:0007744" key="27">
    <source>
    </source>
</evidence>
<evidence type="ECO:0007744" key="28">
    <source>
    </source>
</evidence>
<evidence type="ECO:0007744" key="29">
    <source>
    </source>
</evidence>
<evidence type="ECO:0007744" key="30">
    <source>
    </source>
</evidence>
<evidence type="ECO:0007744" key="31">
    <source>
    </source>
</evidence>
<evidence type="ECO:0007744" key="32">
    <source>
    </source>
</evidence>
<evidence type="ECO:0007744" key="33">
    <source>
    </source>
</evidence>
<evidence type="ECO:0007744" key="34">
    <source>
    </source>
</evidence>
<evidence type="ECO:0007744" key="35">
    <source>
    </source>
</evidence>
<evidence type="ECO:0007744" key="36">
    <source>
    </source>
</evidence>
<evidence type="ECO:0007744" key="37">
    <source>
    </source>
</evidence>
<evidence type="ECO:0007744" key="38">
    <source>
    </source>
</evidence>
<evidence type="ECO:0007829" key="39">
    <source>
        <dbReference type="PDB" id="1ZKH"/>
    </source>
</evidence>
<evidence type="ECO:0007829" key="40">
    <source>
        <dbReference type="PDB" id="2DT6"/>
    </source>
</evidence>
<evidence type="ECO:0007829" key="41">
    <source>
        <dbReference type="PDB" id="2DT7"/>
    </source>
</evidence>
<evidence type="ECO:0007829" key="42">
    <source>
        <dbReference type="PDB" id="7EVO"/>
    </source>
</evidence>
<evidence type="ECO:0007829" key="43">
    <source>
        <dbReference type="PDB" id="7P08"/>
    </source>
</evidence>
<evidence type="ECO:0007829" key="44">
    <source>
        <dbReference type="PDB" id="7P0V"/>
    </source>
</evidence>
<evidence type="ECO:0007829" key="45">
    <source>
        <dbReference type="PDB" id="8Q7N"/>
    </source>
</evidence>
<evidence type="ECO:0007829" key="46">
    <source>
        <dbReference type="PDB" id="8QOZ"/>
    </source>
</evidence>
<dbReference type="EMBL" id="X85237">
    <property type="protein sequence ID" value="CAA59494.1"/>
    <property type="molecule type" value="mRNA"/>
</dbReference>
<dbReference type="EMBL" id="CR456575">
    <property type="protein sequence ID" value="CAG30461.1"/>
    <property type="molecule type" value="mRNA"/>
</dbReference>
<dbReference type="EMBL" id="AC004997">
    <property type="protein sequence ID" value="AAC23435.1"/>
    <property type="molecule type" value="Genomic_DNA"/>
</dbReference>
<dbReference type="EMBL" id="BC001976">
    <property type="protein sequence ID" value="AAH01976.1"/>
    <property type="molecule type" value="mRNA"/>
</dbReference>
<dbReference type="EMBL" id="BC007684">
    <property type="protein sequence ID" value="AAH07684.1"/>
    <property type="molecule type" value="mRNA"/>
</dbReference>
<dbReference type="CCDS" id="CCDS13875.1">
    <molecule id="Q15459-1"/>
</dbReference>
<dbReference type="PIR" id="S60735">
    <property type="entry name" value="S60735"/>
</dbReference>
<dbReference type="RefSeq" id="NP_005868.1">
    <molecule id="Q15459-1"/>
    <property type="nucleotide sequence ID" value="NM_005877.6"/>
</dbReference>
<dbReference type="PDB" id="1ZKH">
    <property type="method" value="NMR"/>
    <property type="chains" value="A=704-789"/>
</dbReference>
<dbReference type="PDB" id="2DT6">
    <property type="method" value="NMR"/>
    <property type="chains" value="A=48-110"/>
</dbReference>
<dbReference type="PDB" id="2DT7">
    <property type="method" value="NMR"/>
    <property type="chains" value="B=134-217"/>
</dbReference>
<dbReference type="PDB" id="5Z56">
    <property type="method" value="EM"/>
    <property type="resolution" value="5.10 A"/>
    <property type="chains" value="u=1-793"/>
</dbReference>
<dbReference type="PDB" id="5Z57">
    <property type="method" value="EM"/>
    <property type="resolution" value="6.50 A"/>
    <property type="chains" value="w=310-384"/>
</dbReference>
<dbReference type="PDB" id="5Z58">
    <property type="method" value="EM"/>
    <property type="resolution" value="4.90 A"/>
    <property type="chains" value="w=310-384"/>
</dbReference>
<dbReference type="PDB" id="6AH0">
    <property type="method" value="EM"/>
    <property type="resolution" value="5.70 A"/>
    <property type="chains" value="u=1-793"/>
</dbReference>
<dbReference type="PDB" id="6AHD">
    <property type="method" value="EM"/>
    <property type="resolution" value="3.80 A"/>
    <property type="chains" value="u=1-793"/>
</dbReference>
<dbReference type="PDB" id="6FF7">
    <property type="method" value="EM"/>
    <property type="resolution" value="4.50 A"/>
    <property type="chains" value="p=1-793"/>
</dbReference>
<dbReference type="PDB" id="6QX9">
    <property type="method" value="EM"/>
    <property type="resolution" value="3.28 A"/>
    <property type="chains" value="A1=1-793"/>
</dbReference>
<dbReference type="PDB" id="6Y53">
    <property type="method" value="EM"/>
    <property type="resolution" value="7.10 A"/>
    <property type="chains" value="6=1-793"/>
</dbReference>
<dbReference type="PDB" id="6Y5Q">
    <property type="method" value="EM"/>
    <property type="resolution" value="7.10 A"/>
    <property type="chains" value="6=1-793"/>
</dbReference>
<dbReference type="PDB" id="7ABG">
    <property type="method" value="EM"/>
    <property type="resolution" value="7.80 A"/>
    <property type="chains" value="p=1-793"/>
</dbReference>
<dbReference type="PDB" id="7ABI">
    <property type="method" value="EM"/>
    <property type="resolution" value="8.00 A"/>
    <property type="chains" value="p=1-793"/>
</dbReference>
<dbReference type="PDB" id="7EVO">
    <property type="method" value="EM"/>
    <property type="resolution" value="2.50 A"/>
    <property type="chains" value="A=1-793"/>
</dbReference>
<dbReference type="PDB" id="7P08">
    <property type="method" value="NMR"/>
    <property type="chains" value="A=704-793"/>
</dbReference>
<dbReference type="PDB" id="7P0V">
    <property type="method" value="X-ray"/>
    <property type="resolution" value="1.56 A"/>
    <property type="chains" value="A=704-793"/>
</dbReference>
<dbReference type="PDB" id="7VH9">
    <property type="method" value="NMR"/>
    <property type="chains" value="A=48-110"/>
</dbReference>
<dbReference type="PDB" id="7VPX">
    <property type="method" value="EM"/>
    <property type="resolution" value="3.00 A"/>
    <property type="chains" value="A=1-793"/>
</dbReference>
<dbReference type="PDB" id="8CH6">
    <property type="method" value="EM"/>
    <property type="resolution" value="5.90 A"/>
    <property type="chains" value="H=1-793"/>
</dbReference>
<dbReference type="PDB" id="8H6E">
    <property type="method" value="EM"/>
    <property type="resolution" value="3.20 A"/>
    <property type="chains" value="2D=1-793"/>
</dbReference>
<dbReference type="PDB" id="8H6J">
    <property type="method" value="EM"/>
    <property type="resolution" value="3.25 A"/>
    <property type="chains" value="2D=1-793"/>
</dbReference>
<dbReference type="PDB" id="8H6K">
    <property type="method" value="EM"/>
    <property type="resolution" value="2.70 A"/>
    <property type="chains" value="2D=1-793"/>
</dbReference>
<dbReference type="PDB" id="8H6L">
    <property type="method" value="EM"/>
    <property type="resolution" value="2.60 A"/>
    <property type="chains" value="2D=1-793"/>
</dbReference>
<dbReference type="PDB" id="8HK1">
    <property type="method" value="EM"/>
    <property type="resolution" value="2.70 A"/>
    <property type="chains" value="A=1-793"/>
</dbReference>
<dbReference type="PDB" id="8I0P">
    <property type="method" value="EM"/>
    <property type="resolution" value="3.40 A"/>
    <property type="chains" value="u=1-793"/>
</dbReference>
<dbReference type="PDB" id="8I0R">
    <property type="method" value="EM"/>
    <property type="resolution" value="3.00 A"/>
    <property type="chains" value="u=1-793"/>
</dbReference>
<dbReference type="PDB" id="8I0S">
    <property type="method" value="EM"/>
    <property type="resolution" value="4.20 A"/>
    <property type="chains" value="u=1-793"/>
</dbReference>
<dbReference type="PDB" id="8I0T">
    <property type="method" value="EM"/>
    <property type="resolution" value="3.00 A"/>
    <property type="chains" value="u=1-793"/>
</dbReference>
<dbReference type="PDB" id="8ID2">
    <property type="method" value="X-ray"/>
    <property type="resolution" value="1.80 A"/>
    <property type="chains" value="A/B=703-793"/>
</dbReference>
<dbReference type="PDB" id="8Q7N">
    <property type="method" value="EM"/>
    <property type="resolution" value="3.10 A"/>
    <property type="chains" value="7=1-793"/>
</dbReference>
<dbReference type="PDB" id="8QO9">
    <property type="method" value="EM"/>
    <property type="resolution" value="5.29 A"/>
    <property type="chains" value="7=1-793"/>
</dbReference>
<dbReference type="PDB" id="8QOZ">
    <property type="method" value="EM"/>
    <property type="resolution" value="3.10 A"/>
    <property type="chains" value="7=1-793"/>
</dbReference>
<dbReference type="PDB" id="8QP8">
    <property type="method" value="EM"/>
    <property type="resolution" value="3.50 A"/>
    <property type="chains" value="7=1-793"/>
</dbReference>
<dbReference type="PDB" id="8QP9">
    <property type="method" value="EM"/>
    <property type="resolution" value="4.10 A"/>
    <property type="chains" value="7=1-793"/>
</dbReference>
<dbReference type="PDB" id="8QPA">
    <property type="method" value="EM"/>
    <property type="resolution" value="3.70 A"/>
    <property type="chains" value="7=1-793"/>
</dbReference>
<dbReference type="PDB" id="8QPB">
    <property type="method" value="EM"/>
    <property type="resolution" value="3.70 A"/>
    <property type="chains" value="7=1-793"/>
</dbReference>
<dbReference type="PDB" id="8QPE">
    <property type="method" value="EM"/>
    <property type="resolution" value="3.10 A"/>
    <property type="chains" value="7=1-793"/>
</dbReference>
<dbReference type="PDB" id="8QPK">
    <property type="method" value="EM"/>
    <property type="resolution" value="4.20 A"/>
    <property type="chains" value="7=1-793"/>
</dbReference>
<dbReference type="PDB" id="8QXD">
    <property type="method" value="EM"/>
    <property type="resolution" value="9.60 A"/>
    <property type="chains" value="7=1-793"/>
</dbReference>
<dbReference type="PDB" id="8QZS">
    <property type="method" value="EM"/>
    <property type="resolution" value="4.10 A"/>
    <property type="chains" value="7=1-793"/>
</dbReference>
<dbReference type="PDB" id="8R08">
    <property type="method" value="EM"/>
    <property type="resolution" value="6.10 A"/>
    <property type="chains" value="7=1-793"/>
</dbReference>
<dbReference type="PDB" id="8R09">
    <property type="method" value="EM"/>
    <property type="resolution" value="4.30 A"/>
    <property type="chains" value="7=1-793"/>
</dbReference>
<dbReference type="PDB" id="8R0A">
    <property type="method" value="EM"/>
    <property type="resolution" value="5.80 A"/>
    <property type="chains" value="7=1-793"/>
</dbReference>
<dbReference type="PDB" id="8R0B">
    <property type="method" value="EM"/>
    <property type="resolution" value="4.40 A"/>
    <property type="chains" value="7=1-793"/>
</dbReference>
<dbReference type="PDB" id="8RM5">
    <property type="method" value="EM"/>
    <property type="resolution" value="6.90 A"/>
    <property type="chains" value="7=1-793"/>
</dbReference>
<dbReference type="PDBsum" id="1ZKH"/>
<dbReference type="PDBsum" id="2DT6"/>
<dbReference type="PDBsum" id="2DT7"/>
<dbReference type="PDBsum" id="5Z56"/>
<dbReference type="PDBsum" id="5Z57"/>
<dbReference type="PDBsum" id="5Z58"/>
<dbReference type="PDBsum" id="6AH0"/>
<dbReference type="PDBsum" id="6AHD"/>
<dbReference type="PDBsum" id="6FF7"/>
<dbReference type="PDBsum" id="6QX9"/>
<dbReference type="PDBsum" id="6Y53"/>
<dbReference type="PDBsum" id="6Y5Q"/>
<dbReference type="PDBsum" id="7ABG"/>
<dbReference type="PDBsum" id="7ABI"/>
<dbReference type="PDBsum" id="7EVO"/>
<dbReference type="PDBsum" id="7P08"/>
<dbReference type="PDBsum" id="7P0V"/>
<dbReference type="PDBsum" id="7VH9"/>
<dbReference type="PDBsum" id="7VPX"/>
<dbReference type="PDBsum" id="8CH6"/>
<dbReference type="PDBsum" id="8H6E"/>
<dbReference type="PDBsum" id="8H6J"/>
<dbReference type="PDBsum" id="8H6K"/>
<dbReference type="PDBsum" id="8H6L"/>
<dbReference type="PDBsum" id="8HK1"/>
<dbReference type="PDBsum" id="8I0P"/>
<dbReference type="PDBsum" id="8I0R"/>
<dbReference type="PDBsum" id="8I0S"/>
<dbReference type="PDBsum" id="8I0T"/>
<dbReference type="PDBsum" id="8ID2"/>
<dbReference type="PDBsum" id="8Q7N"/>
<dbReference type="PDBsum" id="8QO9"/>
<dbReference type="PDBsum" id="8QOZ"/>
<dbReference type="PDBsum" id="8QP8"/>
<dbReference type="PDBsum" id="8QP9"/>
<dbReference type="PDBsum" id="8QPA"/>
<dbReference type="PDBsum" id="8QPB"/>
<dbReference type="PDBsum" id="8QPE"/>
<dbReference type="PDBsum" id="8QPK"/>
<dbReference type="PDBsum" id="8QXD"/>
<dbReference type="PDBsum" id="8QZS"/>
<dbReference type="PDBsum" id="8R08"/>
<dbReference type="PDBsum" id="8R09"/>
<dbReference type="PDBsum" id="8R0A"/>
<dbReference type="PDBsum" id="8R0B"/>
<dbReference type="PDBsum" id="8RM5"/>
<dbReference type="BMRB" id="Q15459"/>
<dbReference type="EMDB" id="EMD-10689"/>
<dbReference type="EMDB" id="EMD-11695"/>
<dbReference type="EMDB" id="EMD-11697"/>
<dbReference type="EMDB" id="EMD-16658"/>
<dbReference type="EMDB" id="EMD-18225"/>
<dbReference type="EMDB" id="EMD-18529"/>
<dbReference type="EMDB" id="EMD-18542"/>
<dbReference type="EMDB" id="EMD-18544"/>
<dbReference type="EMDB" id="EMD-18545"/>
<dbReference type="EMDB" id="EMD-18546"/>
<dbReference type="EMDB" id="EMD-18547"/>
<dbReference type="EMDB" id="EMD-18548"/>
<dbReference type="EMDB" id="EMD-18555"/>
<dbReference type="EMDB" id="EMD-18718"/>
<dbReference type="EMDB" id="EMD-18781"/>
<dbReference type="EMDB" id="EMD-18786"/>
<dbReference type="EMDB" id="EMD-18787"/>
<dbReference type="EMDB" id="EMD-18788"/>
<dbReference type="EMDB" id="EMD-18789"/>
<dbReference type="EMDB" id="EMD-19349"/>
<dbReference type="EMDB" id="EMD-31334"/>
<dbReference type="EMDB" id="EMD-32074"/>
<dbReference type="EMDB" id="EMD-34500"/>
<dbReference type="EMDB" id="EMD-34505"/>
<dbReference type="EMDB" id="EMD-34507"/>
<dbReference type="EMDB" id="EMD-34508"/>
<dbReference type="EMDB" id="EMD-34841"/>
<dbReference type="EMDB" id="EMD-35105"/>
<dbReference type="EMDB" id="EMD-35107"/>
<dbReference type="EMDB" id="EMD-35108"/>
<dbReference type="EMDB" id="EMD-35109"/>
<dbReference type="EMDB" id="EMD-4665"/>
<dbReference type="EMDB" id="EMD-6889"/>
<dbReference type="EMDB" id="EMD-6890"/>
<dbReference type="EMDB" id="EMD-6891"/>
<dbReference type="EMDB" id="EMD-9621"/>
<dbReference type="EMDB" id="EMD-9624"/>
<dbReference type="SMR" id="Q15459"/>
<dbReference type="BioGRID" id="115580">
    <property type="interactions" value="479"/>
</dbReference>
<dbReference type="ComplexPortal" id="CPX-2539">
    <property type="entry name" value="U2 small nuclear ribonucleoprotein complex"/>
</dbReference>
<dbReference type="ComplexPortal" id="CPX-2565">
    <property type="entry name" value="SF3A complex"/>
</dbReference>
<dbReference type="CORUM" id="Q15459"/>
<dbReference type="DIP" id="DIP-29164N"/>
<dbReference type="FunCoup" id="Q15459">
    <property type="interactions" value="3952"/>
</dbReference>
<dbReference type="IntAct" id="Q15459">
    <property type="interactions" value="243"/>
</dbReference>
<dbReference type="MINT" id="Q15459"/>
<dbReference type="STRING" id="9606.ENSP00000215793"/>
<dbReference type="GlyGen" id="Q15459">
    <property type="glycosylation" value="2 sites, 1 O-linked glycan (1 site)"/>
</dbReference>
<dbReference type="iPTMnet" id="Q15459"/>
<dbReference type="MetOSite" id="Q15459"/>
<dbReference type="PhosphoSitePlus" id="Q15459"/>
<dbReference type="SwissPalm" id="Q15459"/>
<dbReference type="BioMuta" id="SF3A1"/>
<dbReference type="DMDM" id="2498882"/>
<dbReference type="jPOST" id="Q15459"/>
<dbReference type="MassIVE" id="Q15459"/>
<dbReference type="PaxDb" id="9606-ENSP00000215793"/>
<dbReference type="PeptideAtlas" id="Q15459"/>
<dbReference type="ProteomicsDB" id="19091"/>
<dbReference type="ProteomicsDB" id="60599">
    <molecule id="Q15459-1"/>
</dbReference>
<dbReference type="Pumba" id="Q15459"/>
<dbReference type="Antibodypedia" id="254">
    <property type="antibodies" value="302 antibodies from 28 providers"/>
</dbReference>
<dbReference type="DNASU" id="10291"/>
<dbReference type="Ensembl" id="ENST00000215793.13">
    <molecule id="Q15459-1"/>
    <property type="protein sequence ID" value="ENSP00000215793.7"/>
    <property type="gene ID" value="ENSG00000099995.19"/>
</dbReference>
<dbReference type="GeneID" id="10291"/>
<dbReference type="KEGG" id="hsa:10291"/>
<dbReference type="MANE-Select" id="ENST00000215793.13">
    <property type="protein sequence ID" value="ENSP00000215793.7"/>
    <property type="RefSeq nucleotide sequence ID" value="NM_005877.6"/>
    <property type="RefSeq protein sequence ID" value="NP_005868.1"/>
</dbReference>
<dbReference type="UCSC" id="uc003ahl.4">
    <molecule id="Q15459-1"/>
    <property type="organism name" value="human"/>
</dbReference>
<dbReference type="AGR" id="HGNC:10765"/>
<dbReference type="CTD" id="10291"/>
<dbReference type="DisGeNET" id="10291"/>
<dbReference type="GeneCards" id="SF3A1"/>
<dbReference type="HGNC" id="HGNC:10765">
    <property type="gene designation" value="SF3A1"/>
</dbReference>
<dbReference type="HPA" id="ENSG00000099995">
    <property type="expression patterns" value="Low tissue specificity"/>
</dbReference>
<dbReference type="MalaCards" id="SF3A1"/>
<dbReference type="MIM" id="605595">
    <property type="type" value="gene"/>
</dbReference>
<dbReference type="neXtProt" id="NX_Q15459"/>
<dbReference type="OpenTargets" id="ENSG00000099995"/>
<dbReference type="PharmGKB" id="PA35683"/>
<dbReference type="VEuPathDB" id="HostDB:ENSG00000099995"/>
<dbReference type="eggNOG" id="KOG0007">
    <property type="taxonomic scope" value="Eukaryota"/>
</dbReference>
<dbReference type="GeneTree" id="ENSGT00730000111077"/>
<dbReference type="HOGENOM" id="CLU_013259_1_0_1"/>
<dbReference type="InParanoid" id="Q15459"/>
<dbReference type="OMA" id="HAYYRHR"/>
<dbReference type="OrthoDB" id="447637at2759"/>
<dbReference type="PAN-GO" id="Q15459">
    <property type="GO annotations" value="4 GO annotations based on evolutionary models"/>
</dbReference>
<dbReference type="PhylomeDB" id="Q15459"/>
<dbReference type="TreeFam" id="TF105705"/>
<dbReference type="PathwayCommons" id="Q15459"/>
<dbReference type="Reactome" id="R-HSA-72163">
    <property type="pathway name" value="mRNA Splicing - Major Pathway"/>
</dbReference>
<dbReference type="SignaLink" id="Q15459"/>
<dbReference type="SIGNOR" id="Q15459"/>
<dbReference type="BioGRID-ORCS" id="10291">
    <property type="hits" value="792 hits in 1165 CRISPR screens"/>
</dbReference>
<dbReference type="CD-CODE" id="804901D1">
    <property type="entry name" value="Nuclear speckle"/>
</dbReference>
<dbReference type="ChiTaRS" id="SF3A1">
    <property type="organism name" value="human"/>
</dbReference>
<dbReference type="EvolutionaryTrace" id="Q15459"/>
<dbReference type="GeneWiki" id="SF3A1"/>
<dbReference type="GenomeRNAi" id="10291"/>
<dbReference type="Pharos" id="Q15459">
    <property type="development level" value="Tbio"/>
</dbReference>
<dbReference type="PRO" id="PR:Q15459"/>
<dbReference type="Proteomes" id="UP000005640">
    <property type="component" value="Chromosome 22"/>
</dbReference>
<dbReference type="RNAct" id="Q15459">
    <property type="molecule type" value="protein"/>
</dbReference>
<dbReference type="Bgee" id="ENSG00000099995">
    <property type="expression patterns" value="Expressed in sperm and 218 other cell types or tissues"/>
</dbReference>
<dbReference type="ExpressionAtlas" id="Q15459">
    <property type="expression patterns" value="baseline and differential"/>
</dbReference>
<dbReference type="GO" id="GO:0071013">
    <property type="term" value="C:catalytic step 2 spliceosome"/>
    <property type="evidence" value="ECO:0000314"/>
    <property type="project" value="UniProtKB"/>
</dbReference>
<dbReference type="GO" id="GO:0016607">
    <property type="term" value="C:nuclear speck"/>
    <property type="evidence" value="ECO:0000314"/>
    <property type="project" value="HPA"/>
</dbReference>
<dbReference type="GO" id="GO:0005654">
    <property type="term" value="C:nucleoplasm"/>
    <property type="evidence" value="ECO:0000314"/>
    <property type="project" value="HPA"/>
</dbReference>
<dbReference type="GO" id="GO:0005634">
    <property type="term" value="C:nucleus"/>
    <property type="evidence" value="ECO:0000314"/>
    <property type="project" value="UniProtKB"/>
</dbReference>
<dbReference type="GO" id="GO:0005681">
    <property type="term" value="C:spliceosomal complex"/>
    <property type="evidence" value="ECO:0000314"/>
    <property type="project" value="HGNC-UCL"/>
</dbReference>
<dbReference type="GO" id="GO:0005686">
    <property type="term" value="C:U2 snRNP"/>
    <property type="evidence" value="ECO:0000314"/>
    <property type="project" value="UniProtKB"/>
</dbReference>
<dbReference type="GO" id="GO:0071005">
    <property type="term" value="C:U2-type precatalytic spliceosome"/>
    <property type="evidence" value="ECO:0000314"/>
    <property type="project" value="UniProtKB"/>
</dbReference>
<dbReference type="GO" id="GO:0071004">
    <property type="term" value="C:U2-type prespliceosome"/>
    <property type="evidence" value="ECO:0000314"/>
    <property type="project" value="UniProtKB"/>
</dbReference>
<dbReference type="GO" id="GO:0005684">
    <property type="term" value="C:U2-type spliceosomal complex"/>
    <property type="evidence" value="ECO:0000314"/>
    <property type="project" value="UniProtKB"/>
</dbReference>
<dbReference type="GO" id="GO:0003723">
    <property type="term" value="F:RNA binding"/>
    <property type="evidence" value="ECO:0000314"/>
    <property type="project" value="UniProtKB"/>
</dbReference>
<dbReference type="GO" id="GO:0000389">
    <property type="term" value="P:mRNA 3'-splice site recognition"/>
    <property type="evidence" value="ECO:0000304"/>
    <property type="project" value="HGNC-UCL"/>
</dbReference>
<dbReference type="GO" id="GO:0045292">
    <property type="term" value="P:mRNA cis splicing, via spliceosome"/>
    <property type="evidence" value="ECO:0007669"/>
    <property type="project" value="InterPro"/>
</dbReference>
<dbReference type="GO" id="GO:0006397">
    <property type="term" value="P:mRNA processing"/>
    <property type="evidence" value="ECO:0000315"/>
    <property type="project" value="HGNC-UCL"/>
</dbReference>
<dbReference type="GO" id="GO:0000398">
    <property type="term" value="P:mRNA splicing, via spliceosome"/>
    <property type="evidence" value="ECO:0000314"/>
    <property type="project" value="UniProtKB"/>
</dbReference>
<dbReference type="GO" id="GO:1903241">
    <property type="term" value="P:U2-type prespliceosome assembly"/>
    <property type="evidence" value="ECO:0000314"/>
    <property type="project" value="UniProtKB"/>
</dbReference>
<dbReference type="CDD" id="cd01800">
    <property type="entry name" value="Ubl_SF3a120"/>
    <property type="match status" value="1"/>
</dbReference>
<dbReference type="FunFam" id="1.10.10.790:FF:000002">
    <property type="entry name" value="Splicing factor 3A subunit 1"/>
    <property type="match status" value="1"/>
</dbReference>
<dbReference type="FunFam" id="3.10.20.90:FF:000091">
    <property type="entry name" value="Splicing factor 3A subunit 1"/>
    <property type="match status" value="1"/>
</dbReference>
<dbReference type="FunFam" id="1.10.10.790:FF:000001">
    <property type="entry name" value="Splicing factor 3a, subunit 1"/>
    <property type="match status" value="1"/>
</dbReference>
<dbReference type="Gene3D" id="3.10.20.90">
    <property type="entry name" value="Phosphatidylinositol 3-kinase Catalytic Subunit, Chain A, domain 1"/>
    <property type="match status" value="1"/>
</dbReference>
<dbReference type="Gene3D" id="1.10.10.790">
    <property type="entry name" value="Surp module"/>
    <property type="match status" value="2"/>
</dbReference>
<dbReference type="InterPro" id="IPR045146">
    <property type="entry name" value="SF3A1"/>
</dbReference>
<dbReference type="InterPro" id="IPR022030">
    <property type="entry name" value="SF3A1_dom"/>
</dbReference>
<dbReference type="InterPro" id="IPR035563">
    <property type="entry name" value="SF3As1_ubi"/>
</dbReference>
<dbReference type="InterPro" id="IPR000061">
    <property type="entry name" value="Surp"/>
</dbReference>
<dbReference type="InterPro" id="IPR035967">
    <property type="entry name" value="SWAP/Surp_sf"/>
</dbReference>
<dbReference type="InterPro" id="IPR000626">
    <property type="entry name" value="Ubiquitin-like_dom"/>
</dbReference>
<dbReference type="InterPro" id="IPR029071">
    <property type="entry name" value="Ubiquitin-like_domsf"/>
</dbReference>
<dbReference type="PANTHER" id="PTHR15316">
    <property type="entry name" value="SPLICEOSOME ASSOCIATED PROTEIN 114/SWAP SPLICING FACTOR-RELATED"/>
    <property type="match status" value="1"/>
</dbReference>
<dbReference type="PANTHER" id="PTHR15316:SF1">
    <property type="entry name" value="SPLICING FACTOR 3A SUBUNIT 1"/>
    <property type="match status" value="1"/>
</dbReference>
<dbReference type="Pfam" id="PF12230">
    <property type="entry name" value="PRP21_like_P"/>
    <property type="match status" value="1"/>
</dbReference>
<dbReference type="Pfam" id="PF01805">
    <property type="entry name" value="Surp"/>
    <property type="match status" value="2"/>
</dbReference>
<dbReference type="Pfam" id="PF00240">
    <property type="entry name" value="ubiquitin"/>
    <property type="match status" value="1"/>
</dbReference>
<dbReference type="SMART" id="SM00648">
    <property type="entry name" value="SWAP"/>
    <property type="match status" value="2"/>
</dbReference>
<dbReference type="SMART" id="SM00213">
    <property type="entry name" value="UBQ"/>
    <property type="match status" value="1"/>
</dbReference>
<dbReference type="SUPFAM" id="SSF109905">
    <property type="entry name" value="Surp module (SWAP domain)"/>
    <property type="match status" value="2"/>
</dbReference>
<dbReference type="SUPFAM" id="SSF54236">
    <property type="entry name" value="Ubiquitin-like"/>
    <property type="match status" value="1"/>
</dbReference>
<dbReference type="PROSITE" id="PS50128">
    <property type="entry name" value="SURP"/>
    <property type="match status" value="2"/>
</dbReference>
<dbReference type="PROSITE" id="PS50053">
    <property type="entry name" value="UBIQUITIN_2"/>
    <property type="match status" value="1"/>
</dbReference>